<sequence length="550" mass="59796">MAAPAGGGGSAVSVLAPNGRRHTVKVTPSTVLLQVLEDTCRRQDFNPSEYDLKFQRTVLDLSLQWRFANLPNNAKLEMVPVSRSREGPENIVRIAFQLDDGSRLQDAFCSRQTLWELLSHFAQTRERLQQLGEKTPVCVYMRNEVTGRAALQNTTLQSLGLTGGSATIRFVIKQCDTAGKQESIAVRSKAPGSPVSSLSADQASSSTLLPLNSGEFSRGDLNHEGDANTSGTGLEGGPKPTDAQTKQSTSEPASAPFVPFSGGGQRLGGPSASLRPLTSPSANSSKSFSGPGGPSKPKKPKPGEEPQQEPEPPVDRDPVVYHPDLEDLLQPWPAEVPDEFFEVTVDDVRRRLAQLKSERKRLEEAPLVTKAFREAQMKEKLERYPKVALRVLFPDRYILQGFFRPSETVGDLRDFVRSHLGNPELSFYLFIAPPKMVLDDHTLTLFQANLFPAALVHFGAEEPTGLYLEPGLLEHTVSPSTADVLVARCMSRASGSPPLLPAPDPVSLESEPIAEDGALGPPEPIQGTAQPVKRSLGKVPKWLKLPASKR</sequence>
<gene>
    <name type="primary">Aspscr1</name>
    <name type="synonym">Tug</name>
</gene>
<proteinExistence type="evidence at protein level"/>
<organism>
    <name type="scientific">Mus musculus</name>
    <name type="common">Mouse</name>
    <dbReference type="NCBI Taxonomy" id="10090"/>
    <lineage>
        <taxon>Eukaryota</taxon>
        <taxon>Metazoa</taxon>
        <taxon>Chordata</taxon>
        <taxon>Craniata</taxon>
        <taxon>Vertebrata</taxon>
        <taxon>Euteleostomi</taxon>
        <taxon>Mammalia</taxon>
        <taxon>Eutheria</taxon>
        <taxon>Euarchontoglires</taxon>
        <taxon>Glires</taxon>
        <taxon>Rodentia</taxon>
        <taxon>Myomorpha</taxon>
        <taxon>Muroidea</taxon>
        <taxon>Muridae</taxon>
        <taxon>Murinae</taxon>
        <taxon>Mus</taxon>
        <taxon>Mus</taxon>
    </lineage>
</organism>
<accession>Q8VBT9</accession>
<accession>A2ABZ7</accession>
<accession>A2AC06</accession>
<accession>Q3UKD1</accession>
<accession>Q6V7K5</accession>
<accession>Q9CT64</accession>
<evidence type="ECO:0000250" key="1"/>
<evidence type="ECO:0000250" key="2">
    <source>
        <dbReference type="UniProtKB" id="Q9BZE9"/>
    </source>
</evidence>
<evidence type="ECO:0000255" key="3">
    <source>
        <dbReference type="PROSITE-ProRule" id="PRU00215"/>
    </source>
</evidence>
<evidence type="ECO:0000256" key="4">
    <source>
        <dbReference type="SAM" id="MobiDB-lite"/>
    </source>
</evidence>
<evidence type="ECO:0000269" key="5">
    <source>
    </source>
</evidence>
<evidence type="ECO:0000303" key="6">
    <source>
    </source>
</evidence>
<evidence type="ECO:0000303" key="7">
    <source>
    </source>
</evidence>
<evidence type="ECO:0007744" key="8">
    <source>
    </source>
</evidence>
<evidence type="ECO:0007829" key="9">
    <source>
        <dbReference type="PDB" id="2AL3"/>
    </source>
</evidence>
<protein>
    <recommendedName>
        <fullName>Tether containing UBX domain for GLUT4</fullName>
    </recommendedName>
    <alternativeName>
        <fullName>Alveolar soft part sarcoma chromosomal region candidate gene 1 protein homolog</fullName>
    </alternativeName>
</protein>
<keyword id="KW-0002">3D-structure</keyword>
<keyword id="KW-0007">Acetylation</keyword>
<keyword id="KW-0025">Alternative splicing</keyword>
<keyword id="KW-0963">Cytoplasm</keyword>
<keyword id="KW-0472">Membrane</keyword>
<keyword id="KW-0539">Nucleus</keyword>
<keyword id="KW-0597">Phosphoprotein</keyword>
<keyword id="KW-1185">Reference proteome</keyword>
<feature type="initiator methionine" description="Removed" evidence="2">
    <location>
        <position position="1"/>
    </location>
</feature>
<feature type="chain" id="PRO_0000249886" description="Tether containing UBX domain for GLUT4">
    <location>
        <begin position="2"/>
        <end position="550"/>
    </location>
</feature>
<feature type="domain" description="UBX" evidence="3">
    <location>
        <begin position="382"/>
        <end position="458"/>
    </location>
</feature>
<feature type="region of interest" description="Disordered" evidence="4">
    <location>
        <begin position="185"/>
        <end position="320"/>
    </location>
</feature>
<feature type="region of interest" description="Interaction with GLUT4" evidence="5">
    <location>
        <begin position="313"/>
        <end position="376"/>
    </location>
</feature>
<feature type="region of interest" description="Disordered" evidence="4">
    <location>
        <begin position="496"/>
        <end position="550"/>
    </location>
</feature>
<feature type="compositionally biased region" description="Low complexity" evidence="4">
    <location>
        <begin position="193"/>
        <end position="206"/>
    </location>
</feature>
<feature type="compositionally biased region" description="Basic and acidic residues" evidence="4">
    <location>
        <begin position="217"/>
        <end position="226"/>
    </location>
</feature>
<feature type="compositionally biased region" description="Polar residues" evidence="4">
    <location>
        <begin position="242"/>
        <end position="252"/>
    </location>
</feature>
<feature type="modified residue" description="N-acetylalanine" evidence="2">
    <location>
        <position position="2"/>
    </location>
</feature>
<feature type="modified residue" description="Phosphoserine" evidence="8">
    <location>
        <position position="193"/>
    </location>
</feature>
<feature type="modified residue" description="Phosphoserine" evidence="2">
    <location>
        <position position="496"/>
    </location>
</feature>
<feature type="splice variant" id="VSP_020579" description="In isoform 2 and isoform 3." evidence="6 7">
    <location>
        <begin position="1"/>
        <end position="77"/>
    </location>
</feature>
<feature type="splice variant" id="VSP_020580" description="In isoform 3." evidence="7">
    <location>
        <begin position="410"/>
        <end position="430"/>
    </location>
</feature>
<feature type="strand" evidence="9">
    <location>
        <begin position="12"/>
        <end position="15"/>
    </location>
</feature>
<feature type="strand" evidence="9">
    <location>
        <begin position="21"/>
        <end position="24"/>
    </location>
</feature>
<feature type="helix" evidence="9">
    <location>
        <begin position="32"/>
        <end position="42"/>
    </location>
</feature>
<feature type="helix" evidence="9">
    <location>
        <begin position="47"/>
        <end position="49"/>
    </location>
</feature>
<feature type="strand" evidence="9">
    <location>
        <begin position="51"/>
        <end position="54"/>
    </location>
</feature>
<feature type="strand" evidence="9">
    <location>
        <begin position="57"/>
        <end position="62"/>
    </location>
</feature>
<feature type="helix" evidence="9">
    <location>
        <begin position="65"/>
        <end position="68"/>
    </location>
</feature>
<feature type="strand" evidence="9">
    <location>
        <begin position="75"/>
        <end position="79"/>
    </location>
</feature>
<feature type="strand" evidence="9">
    <location>
        <begin position="81"/>
        <end position="83"/>
    </location>
</feature>
<dbReference type="EMBL" id="AY349132">
    <property type="protein sequence ID" value="AAR01613.1"/>
    <property type="molecule type" value="mRNA"/>
</dbReference>
<dbReference type="EMBL" id="AY349133">
    <property type="protein sequence ID" value="AAR01614.1"/>
    <property type="molecule type" value="mRNA"/>
</dbReference>
<dbReference type="EMBL" id="AK004509">
    <property type="protein sequence ID" value="BAB23341.1"/>
    <property type="molecule type" value="mRNA"/>
</dbReference>
<dbReference type="EMBL" id="AK146061">
    <property type="protein sequence ID" value="BAE26870.1"/>
    <property type="molecule type" value="mRNA"/>
</dbReference>
<dbReference type="EMBL" id="AL663030">
    <property type="status" value="NOT_ANNOTATED_CDS"/>
    <property type="molecule type" value="Genomic_DNA"/>
</dbReference>
<dbReference type="EMBL" id="BC019177">
    <property type="protein sequence ID" value="AAH19177.1"/>
    <property type="molecule type" value="mRNA"/>
</dbReference>
<dbReference type="EMBL" id="BC022115">
    <property type="protein sequence ID" value="AAH22115.1"/>
    <property type="molecule type" value="mRNA"/>
</dbReference>
<dbReference type="EMBL" id="BC031153">
    <property type="protein sequence ID" value="AAH31153.1"/>
    <property type="molecule type" value="mRNA"/>
</dbReference>
<dbReference type="CCDS" id="CCDS25751.1">
    <molecule id="Q8VBT9-1"/>
</dbReference>
<dbReference type="CCDS" id="CCDS25752.1">
    <molecule id="Q8VBT9-2"/>
</dbReference>
<dbReference type="CCDS" id="CCDS49008.1">
    <molecule id="Q8VBT9-3"/>
</dbReference>
<dbReference type="RefSeq" id="NP_001157696.1">
    <molecule id="Q8VBT9-3"/>
    <property type="nucleotide sequence ID" value="NM_001164224.1"/>
</dbReference>
<dbReference type="RefSeq" id="NP_001412366.1">
    <molecule id="Q8VBT9-2"/>
    <property type="nucleotide sequence ID" value="NM_001425437.1"/>
</dbReference>
<dbReference type="RefSeq" id="NP_001412367.1">
    <molecule id="Q8VBT9-3"/>
    <property type="nucleotide sequence ID" value="NM_001425438.1"/>
</dbReference>
<dbReference type="RefSeq" id="NP_081153.1">
    <molecule id="Q8VBT9-1"/>
    <property type="nucleotide sequence ID" value="NM_026877.3"/>
</dbReference>
<dbReference type="RefSeq" id="NP_937866.1">
    <molecule id="Q8VBT9-2"/>
    <property type="nucleotide sequence ID" value="NM_198223.2"/>
</dbReference>
<dbReference type="RefSeq" id="XP_006534149.1">
    <property type="nucleotide sequence ID" value="XM_006534086.3"/>
</dbReference>
<dbReference type="RefSeq" id="XP_006534150.1">
    <molecule id="Q8VBT9-2"/>
    <property type="nucleotide sequence ID" value="XM_006534087.4"/>
</dbReference>
<dbReference type="RefSeq" id="XP_036012836.1">
    <molecule id="Q8VBT9-2"/>
    <property type="nucleotide sequence ID" value="XM_036156943.1"/>
</dbReference>
<dbReference type="PDB" id="2AL3">
    <property type="method" value="NMR"/>
    <property type="chains" value="A=1-90"/>
</dbReference>
<dbReference type="PDBsum" id="2AL3"/>
<dbReference type="BMRB" id="Q8VBT9"/>
<dbReference type="SMR" id="Q8VBT9"/>
<dbReference type="BioGRID" id="213125">
    <property type="interactions" value="23"/>
</dbReference>
<dbReference type="FunCoup" id="Q8VBT9">
    <property type="interactions" value="2009"/>
</dbReference>
<dbReference type="IntAct" id="Q8VBT9">
    <property type="interactions" value="1"/>
</dbReference>
<dbReference type="STRING" id="10090.ENSMUSP00000026135"/>
<dbReference type="GlyGen" id="Q8VBT9">
    <property type="glycosylation" value="1 site, 1 N-linked glycan (1 site)"/>
</dbReference>
<dbReference type="iPTMnet" id="Q8VBT9"/>
<dbReference type="PhosphoSitePlus" id="Q8VBT9"/>
<dbReference type="SwissPalm" id="Q8VBT9"/>
<dbReference type="REPRODUCTION-2DPAGE" id="Q8VBT9"/>
<dbReference type="jPOST" id="Q8VBT9"/>
<dbReference type="PaxDb" id="10090-ENSMUSP00000026135"/>
<dbReference type="PeptideAtlas" id="Q8VBT9"/>
<dbReference type="ProteomicsDB" id="281848">
    <molecule id="Q8VBT9-1"/>
</dbReference>
<dbReference type="ProteomicsDB" id="281849">
    <molecule id="Q8VBT9-2"/>
</dbReference>
<dbReference type="ProteomicsDB" id="281850">
    <molecule id="Q8VBT9-3"/>
</dbReference>
<dbReference type="Pumba" id="Q8VBT9"/>
<dbReference type="Antibodypedia" id="19857">
    <property type="antibodies" value="302 antibodies from 30 providers"/>
</dbReference>
<dbReference type="DNASU" id="68938"/>
<dbReference type="Ensembl" id="ENSMUST00000026135.15">
    <molecule id="Q8VBT9-1"/>
    <property type="protein sequence ID" value="ENSMUSP00000026135.9"/>
    <property type="gene ID" value="ENSMUSG00000025142.19"/>
</dbReference>
<dbReference type="Ensembl" id="ENSMUST00000103016.8">
    <molecule id="Q8VBT9-2"/>
    <property type="protein sequence ID" value="ENSMUSP00000099305.2"/>
    <property type="gene ID" value="ENSMUSG00000025142.19"/>
</dbReference>
<dbReference type="Ensembl" id="ENSMUST00000106158.9">
    <molecule id="Q8VBT9-3"/>
    <property type="protein sequence ID" value="ENSMUSP00000101764.3"/>
    <property type="gene ID" value="ENSMUSG00000025142.19"/>
</dbReference>
<dbReference type="Ensembl" id="ENSMUST00000106159.10">
    <molecule id="Q8VBT9-2"/>
    <property type="protein sequence ID" value="ENSMUSP00000101765.4"/>
    <property type="gene ID" value="ENSMUSG00000025142.19"/>
</dbReference>
<dbReference type="Ensembl" id="ENSMUST00000106160.9">
    <molecule id="Q8VBT9-3"/>
    <property type="protein sequence ID" value="ENSMUSP00000101766.3"/>
    <property type="gene ID" value="ENSMUSG00000025142.19"/>
</dbReference>
<dbReference type="GeneID" id="68938"/>
<dbReference type="KEGG" id="mmu:68938"/>
<dbReference type="UCSC" id="uc007mua.2">
    <molecule id="Q8VBT9-1"/>
    <property type="organism name" value="mouse"/>
</dbReference>
<dbReference type="UCSC" id="uc007mub.1">
    <molecule id="Q8VBT9-3"/>
    <property type="organism name" value="mouse"/>
</dbReference>
<dbReference type="AGR" id="MGI:1916188"/>
<dbReference type="CTD" id="79058"/>
<dbReference type="MGI" id="MGI:1916188">
    <property type="gene designation" value="Aspscr1"/>
</dbReference>
<dbReference type="VEuPathDB" id="HostDB:ENSMUSG00000025142"/>
<dbReference type="eggNOG" id="KOG2699">
    <property type="taxonomic scope" value="Eukaryota"/>
</dbReference>
<dbReference type="GeneTree" id="ENSGT00940000156853"/>
<dbReference type="HOGENOM" id="CLU_025227_0_0_1"/>
<dbReference type="InParanoid" id="Q8VBT9"/>
<dbReference type="OMA" id="APKYDWG"/>
<dbReference type="OrthoDB" id="440781at2759"/>
<dbReference type="PhylomeDB" id="Q8VBT9"/>
<dbReference type="TreeFam" id="TF320363"/>
<dbReference type="BioGRID-ORCS" id="68938">
    <property type="hits" value="2 hits in 78 CRISPR screens"/>
</dbReference>
<dbReference type="ChiTaRS" id="Aspscr1">
    <property type="organism name" value="mouse"/>
</dbReference>
<dbReference type="EvolutionaryTrace" id="Q8VBT9"/>
<dbReference type="PRO" id="PR:Q8VBT9"/>
<dbReference type="Proteomes" id="UP000000589">
    <property type="component" value="Chromosome 11"/>
</dbReference>
<dbReference type="RNAct" id="Q8VBT9">
    <property type="molecule type" value="protein"/>
</dbReference>
<dbReference type="Bgee" id="ENSMUSG00000025142">
    <property type="expression patterns" value="Expressed in spermatid and 230 other cell types or tissues"/>
</dbReference>
<dbReference type="ExpressionAtlas" id="Q8VBT9">
    <property type="expression patterns" value="baseline and differential"/>
</dbReference>
<dbReference type="GO" id="GO:0009898">
    <property type="term" value="C:cytoplasmic side of plasma membrane"/>
    <property type="evidence" value="ECO:0000314"/>
    <property type="project" value="MGI"/>
</dbReference>
<dbReference type="GO" id="GO:0030659">
    <property type="term" value="C:cytoplasmic vesicle membrane"/>
    <property type="evidence" value="ECO:0000304"/>
    <property type="project" value="Reactome"/>
</dbReference>
<dbReference type="GO" id="GO:0005829">
    <property type="term" value="C:cytosol"/>
    <property type="evidence" value="ECO:0000314"/>
    <property type="project" value="MGI"/>
</dbReference>
<dbReference type="GO" id="GO:0012505">
    <property type="term" value="C:endomembrane system"/>
    <property type="evidence" value="ECO:0007669"/>
    <property type="project" value="UniProtKB-SubCell"/>
</dbReference>
<dbReference type="GO" id="GO:0033116">
    <property type="term" value="C:endoplasmic reticulum-Golgi intermediate compartment membrane"/>
    <property type="evidence" value="ECO:0007669"/>
    <property type="project" value="UniProtKB-SubCell"/>
</dbReference>
<dbReference type="GO" id="GO:0005654">
    <property type="term" value="C:nucleoplasm"/>
    <property type="evidence" value="ECO:0007669"/>
    <property type="project" value="Ensembl"/>
</dbReference>
<dbReference type="GO" id="GO:0048471">
    <property type="term" value="C:perinuclear region of cytoplasm"/>
    <property type="evidence" value="ECO:0000314"/>
    <property type="project" value="MGI"/>
</dbReference>
<dbReference type="GO" id="GO:0012506">
    <property type="term" value="C:vesicle membrane"/>
    <property type="evidence" value="ECO:0000314"/>
    <property type="project" value="MGI"/>
</dbReference>
<dbReference type="GO" id="GO:0042593">
    <property type="term" value="P:glucose homeostasis"/>
    <property type="evidence" value="ECO:0000314"/>
    <property type="project" value="MGI"/>
</dbReference>
<dbReference type="GO" id="GO:0006886">
    <property type="term" value="P:intracellular protein transport"/>
    <property type="evidence" value="ECO:0000314"/>
    <property type="project" value="MGI"/>
</dbReference>
<dbReference type="GO" id="GO:0046324">
    <property type="term" value="P:regulation of D-glucose import"/>
    <property type="evidence" value="ECO:0000314"/>
    <property type="project" value="MGI"/>
</dbReference>
<dbReference type="CDD" id="cd16105">
    <property type="entry name" value="Ubl_ASPSCR1_like"/>
    <property type="match status" value="1"/>
</dbReference>
<dbReference type="CDD" id="cd17075">
    <property type="entry name" value="UBX1_UBXN9"/>
    <property type="match status" value="1"/>
</dbReference>
<dbReference type="CDD" id="cd16118">
    <property type="entry name" value="UBX2_UBXN9"/>
    <property type="match status" value="1"/>
</dbReference>
<dbReference type="FunFam" id="3.10.20.90:FF:000274">
    <property type="entry name" value="Tether containing UBX domain for GLUT4"/>
    <property type="match status" value="1"/>
</dbReference>
<dbReference type="FunFam" id="3.10.20.90:FF:000204">
    <property type="entry name" value="tether containing UBX domain for GLUT4"/>
    <property type="match status" value="1"/>
</dbReference>
<dbReference type="Gene3D" id="3.10.20.90">
    <property type="entry name" value="Phosphatidylinositol 3-kinase Catalytic Subunit, Chain A, domain 1"/>
    <property type="match status" value="3"/>
</dbReference>
<dbReference type="InterPro" id="IPR021569">
    <property type="entry name" value="TUG-UBL1"/>
</dbReference>
<dbReference type="InterPro" id="IPR029071">
    <property type="entry name" value="Ubiquitin-like_domsf"/>
</dbReference>
<dbReference type="InterPro" id="IPR001012">
    <property type="entry name" value="UBX_dom"/>
</dbReference>
<dbReference type="PANTHER" id="PTHR46467">
    <property type="entry name" value="TETHER CONTAINING UBX DOMAIN FOR GLUT4"/>
    <property type="match status" value="1"/>
</dbReference>
<dbReference type="PANTHER" id="PTHR46467:SF1">
    <property type="entry name" value="TETHER CONTAINING UBX DOMAIN FOR GLUT4"/>
    <property type="match status" value="1"/>
</dbReference>
<dbReference type="Pfam" id="PF11470">
    <property type="entry name" value="TUG-UBL1"/>
    <property type="match status" value="1"/>
</dbReference>
<dbReference type="Pfam" id="PF00789">
    <property type="entry name" value="UBX"/>
    <property type="match status" value="1"/>
</dbReference>
<dbReference type="SUPFAM" id="SSF54236">
    <property type="entry name" value="Ubiquitin-like"/>
    <property type="match status" value="2"/>
</dbReference>
<dbReference type="PROSITE" id="PS50033">
    <property type="entry name" value="UBX"/>
    <property type="match status" value="1"/>
</dbReference>
<reference key="1">
    <citation type="journal article" date="2003" name="Nature">
        <title>Functional cloning of TUG as a regulator of GLUT4 glucose transporter trafficking.</title>
        <authorList>
            <person name="Bogan J.S."/>
            <person name="Hendon N."/>
            <person name="McKee A.E."/>
            <person name="Tsao T.-S."/>
            <person name="Lodish H.F."/>
        </authorList>
    </citation>
    <scope>NUCLEOTIDE SEQUENCE [MRNA] (ISOFORMS 1 AND 2)</scope>
    <scope>FUNCTION</scope>
    <scope>INTERACTION WITH GLUT4</scope>
    <scope>SUBCELLULAR LOCATION</scope>
    <scope>TISSUE SPECIFICITY</scope>
    <source>
        <tissue>Liver</tissue>
        <tissue>Muscle</tissue>
    </source>
</reference>
<reference key="2">
    <citation type="journal article" date="2005" name="Science">
        <title>The transcriptional landscape of the mammalian genome.</title>
        <authorList>
            <person name="Carninci P."/>
            <person name="Kasukawa T."/>
            <person name="Katayama S."/>
            <person name="Gough J."/>
            <person name="Frith M.C."/>
            <person name="Maeda N."/>
            <person name="Oyama R."/>
            <person name="Ravasi T."/>
            <person name="Lenhard B."/>
            <person name="Wells C."/>
            <person name="Kodzius R."/>
            <person name="Shimokawa K."/>
            <person name="Bajic V.B."/>
            <person name="Brenner S.E."/>
            <person name="Batalov S."/>
            <person name="Forrest A.R."/>
            <person name="Zavolan M."/>
            <person name="Davis M.J."/>
            <person name="Wilming L.G."/>
            <person name="Aidinis V."/>
            <person name="Allen J.E."/>
            <person name="Ambesi-Impiombato A."/>
            <person name="Apweiler R."/>
            <person name="Aturaliya R.N."/>
            <person name="Bailey T.L."/>
            <person name="Bansal M."/>
            <person name="Baxter L."/>
            <person name="Beisel K.W."/>
            <person name="Bersano T."/>
            <person name="Bono H."/>
            <person name="Chalk A.M."/>
            <person name="Chiu K.P."/>
            <person name="Choudhary V."/>
            <person name="Christoffels A."/>
            <person name="Clutterbuck D.R."/>
            <person name="Crowe M.L."/>
            <person name="Dalla E."/>
            <person name="Dalrymple B.P."/>
            <person name="de Bono B."/>
            <person name="Della Gatta G."/>
            <person name="di Bernardo D."/>
            <person name="Down T."/>
            <person name="Engstrom P."/>
            <person name="Fagiolini M."/>
            <person name="Faulkner G."/>
            <person name="Fletcher C.F."/>
            <person name="Fukushima T."/>
            <person name="Furuno M."/>
            <person name="Futaki S."/>
            <person name="Gariboldi M."/>
            <person name="Georgii-Hemming P."/>
            <person name="Gingeras T.R."/>
            <person name="Gojobori T."/>
            <person name="Green R.E."/>
            <person name="Gustincich S."/>
            <person name="Harbers M."/>
            <person name="Hayashi Y."/>
            <person name="Hensch T.K."/>
            <person name="Hirokawa N."/>
            <person name="Hill D."/>
            <person name="Huminiecki L."/>
            <person name="Iacono M."/>
            <person name="Ikeo K."/>
            <person name="Iwama A."/>
            <person name="Ishikawa T."/>
            <person name="Jakt M."/>
            <person name="Kanapin A."/>
            <person name="Katoh M."/>
            <person name="Kawasawa Y."/>
            <person name="Kelso J."/>
            <person name="Kitamura H."/>
            <person name="Kitano H."/>
            <person name="Kollias G."/>
            <person name="Krishnan S.P."/>
            <person name="Kruger A."/>
            <person name="Kummerfeld S.K."/>
            <person name="Kurochkin I.V."/>
            <person name="Lareau L.F."/>
            <person name="Lazarevic D."/>
            <person name="Lipovich L."/>
            <person name="Liu J."/>
            <person name="Liuni S."/>
            <person name="McWilliam S."/>
            <person name="Madan Babu M."/>
            <person name="Madera M."/>
            <person name="Marchionni L."/>
            <person name="Matsuda H."/>
            <person name="Matsuzawa S."/>
            <person name="Miki H."/>
            <person name="Mignone F."/>
            <person name="Miyake S."/>
            <person name="Morris K."/>
            <person name="Mottagui-Tabar S."/>
            <person name="Mulder N."/>
            <person name="Nakano N."/>
            <person name="Nakauchi H."/>
            <person name="Ng P."/>
            <person name="Nilsson R."/>
            <person name="Nishiguchi S."/>
            <person name="Nishikawa S."/>
            <person name="Nori F."/>
            <person name="Ohara O."/>
            <person name="Okazaki Y."/>
            <person name="Orlando V."/>
            <person name="Pang K.C."/>
            <person name="Pavan W.J."/>
            <person name="Pavesi G."/>
            <person name="Pesole G."/>
            <person name="Petrovsky N."/>
            <person name="Piazza S."/>
            <person name="Reed J."/>
            <person name="Reid J.F."/>
            <person name="Ring B.Z."/>
            <person name="Ringwald M."/>
            <person name="Rost B."/>
            <person name="Ruan Y."/>
            <person name="Salzberg S.L."/>
            <person name="Sandelin A."/>
            <person name="Schneider C."/>
            <person name="Schoenbach C."/>
            <person name="Sekiguchi K."/>
            <person name="Semple C.A."/>
            <person name="Seno S."/>
            <person name="Sessa L."/>
            <person name="Sheng Y."/>
            <person name="Shibata Y."/>
            <person name="Shimada H."/>
            <person name="Shimada K."/>
            <person name="Silva D."/>
            <person name="Sinclair B."/>
            <person name="Sperling S."/>
            <person name="Stupka E."/>
            <person name="Sugiura K."/>
            <person name="Sultana R."/>
            <person name="Takenaka Y."/>
            <person name="Taki K."/>
            <person name="Tammoja K."/>
            <person name="Tan S.L."/>
            <person name="Tang S."/>
            <person name="Taylor M.S."/>
            <person name="Tegner J."/>
            <person name="Teichmann S.A."/>
            <person name="Ueda H.R."/>
            <person name="van Nimwegen E."/>
            <person name="Verardo R."/>
            <person name="Wei C.L."/>
            <person name="Yagi K."/>
            <person name="Yamanishi H."/>
            <person name="Zabarovsky E."/>
            <person name="Zhu S."/>
            <person name="Zimmer A."/>
            <person name="Hide W."/>
            <person name="Bult C."/>
            <person name="Grimmond S.M."/>
            <person name="Teasdale R.D."/>
            <person name="Liu E.T."/>
            <person name="Brusic V."/>
            <person name="Quackenbush J."/>
            <person name="Wahlestedt C."/>
            <person name="Mattick J.S."/>
            <person name="Hume D.A."/>
            <person name="Kai C."/>
            <person name="Sasaki D."/>
            <person name="Tomaru Y."/>
            <person name="Fukuda S."/>
            <person name="Kanamori-Katayama M."/>
            <person name="Suzuki M."/>
            <person name="Aoki J."/>
            <person name="Arakawa T."/>
            <person name="Iida J."/>
            <person name="Imamura K."/>
            <person name="Itoh M."/>
            <person name="Kato T."/>
            <person name="Kawaji H."/>
            <person name="Kawagashira N."/>
            <person name="Kawashima T."/>
            <person name="Kojima M."/>
            <person name="Kondo S."/>
            <person name="Konno H."/>
            <person name="Nakano K."/>
            <person name="Ninomiya N."/>
            <person name="Nishio T."/>
            <person name="Okada M."/>
            <person name="Plessy C."/>
            <person name="Shibata K."/>
            <person name="Shiraki T."/>
            <person name="Suzuki S."/>
            <person name="Tagami M."/>
            <person name="Waki K."/>
            <person name="Watahiki A."/>
            <person name="Okamura-Oho Y."/>
            <person name="Suzuki H."/>
            <person name="Kawai J."/>
            <person name="Hayashizaki Y."/>
        </authorList>
    </citation>
    <scope>NUCLEOTIDE SEQUENCE [LARGE SCALE MRNA] (ISOFORMS 1 AND 3)</scope>
    <source>
        <strain>C57BL/6J</strain>
        <tissue>Embryo</tissue>
        <tissue>Placenta</tissue>
    </source>
</reference>
<reference key="3">
    <citation type="journal article" date="2009" name="PLoS Biol.">
        <title>Lineage-specific biology revealed by a finished genome assembly of the mouse.</title>
        <authorList>
            <person name="Church D.M."/>
            <person name="Goodstadt L."/>
            <person name="Hillier L.W."/>
            <person name="Zody M.C."/>
            <person name="Goldstein S."/>
            <person name="She X."/>
            <person name="Bult C.J."/>
            <person name="Agarwala R."/>
            <person name="Cherry J.L."/>
            <person name="DiCuccio M."/>
            <person name="Hlavina W."/>
            <person name="Kapustin Y."/>
            <person name="Meric P."/>
            <person name="Maglott D."/>
            <person name="Birtle Z."/>
            <person name="Marques A.C."/>
            <person name="Graves T."/>
            <person name="Zhou S."/>
            <person name="Teague B."/>
            <person name="Potamousis K."/>
            <person name="Churas C."/>
            <person name="Place M."/>
            <person name="Herschleb J."/>
            <person name="Runnheim R."/>
            <person name="Forrest D."/>
            <person name="Amos-Landgraf J."/>
            <person name="Schwartz D.C."/>
            <person name="Cheng Z."/>
            <person name="Lindblad-Toh K."/>
            <person name="Eichler E.E."/>
            <person name="Ponting C.P."/>
        </authorList>
    </citation>
    <scope>NUCLEOTIDE SEQUENCE [LARGE SCALE GENOMIC DNA]</scope>
    <source>
        <strain>C57BL/6J</strain>
    </source>
</reference>
<reference key="4">
    <citation type="journal article" date="2004" name="Genome Res.">
        <title>The status, quality, and expansion of the NIH full-length cDNA project: the Mammalian Gene Collection (MGC).</title>
        <authorList>
            <consortium name="The MGC Project Team"/>
        </authorList>
    </citation>
    <scope>NUCLEOTIDE SEQUENCE [LARGE SCALE MRNA] (ISOFORM 1)</scope>
    <source>
        <strain>FVB/N</strain>
        <tissue>Liver</tissue>
        <tissue>Mammary tumor</tissue>
    </source>
</reference>
<reference key="5">
    <citation type="journal article" date="2004" name="Mol. Cell. Proteomics">
        <title>Phosphoproteomic analysis of the developing mouse brain.</title>
        <authorList>
            <person name="Ballif B.A."/>
            <person name="Villen J."/>
            <person name="Beausoleil S.A."/>
            <person name="Schwartz D."/>
            <person name="Gygi S.P."/>
        </authorList>
    </citation>
    <scope>IDENTIFICATION BY MASS SPECTROMETRY [LARGE SCALE ANALYSIS]</scope>
    <source>
        <tissue>Embryonic brain</tissue>
    </source>
</reference>
<reference key="6">
    <citation type="journal article" date="2010" name="Cell">
        <title>A tissue-specific atlas of mouse protein phosphorylation and expression.</title>
        <authorList>
            <person name="Huttlin E.L."/>
            <person name="Jedrychowski M.P."/>
            <person name="Elias J.E."/>
            <person name="Goswami T."/>
            <person name="Rad R."/>
            <person name="Beausoleil S.A."/>
            <person name="Villen J."/>
            <person name="Haas W."/>
            <person name="Sowa M.E."/>
            <person name="Gygi S.P."/>
        </authorList>
    </citation>
    <scope>PHOSPHORYLATION [LARGE SCALE ANALYSIS] AT SER-193</scope>
    <scope>IDENTIFICATION BY MASS SPECTROMETRY [LARGE SCALE ANALYSIS]</scope>
    <source>
        <tissue>Brain</tissue>
        <tissue>Heart</tissue>
        <tissue>Kidney</tissue>
        <tissue>Liver</tissue>
        <tissue>Lung</tissue>
        <tissue>Pancreas</tissue>
        <tissue>Spleen</tissue>
        <tissue>Testis</tissue>
    </source>
</reference>
<reference key="7">
    <citation type="journal article" date="2006" name="Protein Sci.">
        <title>Solution structure and backbone dynamics of an N-terminal ubiquitin-like domain in the GLUT4-regulating protein, TUG.</title>
        <authorList>
            <person name="Tettamanzi M.C."/>
            <person name="Yu C."/>
            <person name="Bogan J.S."/>
            <person name="Hodsdon M.E."/>
        </authorList>
    </citation>
    <scope>STRUCTURE BY NMR OF 1-90</scope>
</reference>
<comment type="function">
    <text evidence="1 5">Enhances VCP methylation catalyzed by VCPKMT (By similarity). Tethering protein that sequesters GLUT4-containing vesicles in the cytoplasm in the absence of insulin. Modulates the amount of GLUT4 that is available at the cell surface.</text>
</comment>
<comment type="subunit">
    <text evidence="1 2 5">Interacts with VCP. Interacts with VCPKMT (By similarity). Interacts with GLUT4.</text>
</comment>
<comment type="subcellular location">
    <subcellularLocation>
        <location evidence="5">Endomembrane system</location>
        <topology evidence="5">Peripheral membrane protein</topology>
    </subcellularLocation>
    <subcellularLocation>
        <location evidence="2">Endoplasmic reticulum-Golgi intermediate compartment membrane</location>
        <topology>Peripheral membrane protein</topology>
    </subcellularLocation>
    <subcellularLocation>
        <location evidence="1">Cytoplasm</location>
    </subcellularLocation>
    <subcellularLocation>
        <location evidence="1">Nucleus</location>
    </subcellularLocation>
</comment>
<comment type="alternative products">
    <event type="alternative splicing"/>
    <isoform>
        <id>Q8VBT9-1</id>
        <name>1</name>
        <name>Long</name>
        <sequence type="displayed"/>
    </isoform>
    <isoform>
        <id>Q8VBT9-2</id>
        <name>2</name>
        <name>Short</name>
        <sequence type="described" ref="VSP_020579"/>
    </isoform>
    <isoform>
        <id>Q8VBT9-3</id>
        <name>3</name>
        <sequence type="described" ref="VSP_020579 VSP_020580"/>
    </isoform>
</comment>
<comment type="tissue specificity">
    <text evidence="5">Ubiquitous.</text>
</comment>
<name>ASPC1_MOUSE</name>